<name>Y1786_PSE14</name>
<proteinExistence type="inferred from homology"/>
<gene>
    <name type="ordered locus">PSPPH_1786</name>
</gene>
<evidence type="ECO:0000255" key="1">
    <source>
        <dbReference type="HAMAP-Rule" id="MF_00274"/>
    </source>
</evidence>
<evidence type="ECO:0000256" key="2">
    <source>
        <dbReference type="SAM" id="MobiDB-lite"/>
    </source>
</evidence>
<feature type="chain" id="PRO_1000003799" description="Nucleoid-associated protein PSPPH_1786">
    <location>
        <begin position="1"/>
        <end position="108"/>
    </location>
</feature>
<feature type="region of interest" description="Disordered" evidence="2">
    <location>
        <begin position="85"/>
        <end position="108"/>
    </location>
</feature>
<feature type="compositionally biased region" description="Polar residues" evidence="2">
    <location>
        <begin position="85"/>
        <end position="96"/>
    </location>
</feature>
<reference key="1">
    <citation type="journal article" date="2005" name="J. Bacteriol.">
        <title>Whole-genome sequence analysis of Pseudomonas syringae pv. phaseolicola 1448A reveals divergence among pathovars in genes involved in virulence and transposition.</title>
        <authorList>
            <person name="Joardar V."/>
            <person name="Lindeberg M."/>
            <person name="Jackson R.W."/>
            <person name="Selengut J."/>
            <person name="Dodson R."/>
            <person name="Brinkac L.M."/>
            <person name="Daugherty S.C."/>
            <person name="DeBoy R.T."/>
            <person name="Durkin A.S."/>
            <person name="Gwinn Giglio M."/>
            <person name="Madupu R."/>
            <person name="Nelson W.C."/>
            <person name="Rosovitz M.J."/>
            <person name="Sullivan S.A."/>
            <person name="Crabtree J."/>
            <person name="Creasy T."/>
            <person name="Davidsen T.M."/>
            <person name="Haft D.H."/>
            <person name="Zafar N."/>
            <person name="Zhou L."/>
            <person name="Halpin R."/>
            <person name="Holley T."/>
            <person name="Khouri H.M."/>
            <person name="Feldblyum T.V."/>
            <person name="White O."/>
            <person name="Fraser C.M."/>
            <person name="Chatterjee A.K."/>
            <person name="Cartinhour S."/>
            <person name="Schneider D."/>
            <person name="Mansfield J.W."/>
            <person name="Collmer A."/>
            <person name="Buell R."/>
        </authorList>
    </citation>
    <scope>NUCLEOTIDE SEQUENCE [LARGE SCALE GENOMIC DNA]</scope>
    <source>
        <strain>1448A / Race 6</strain>
    </source>
</reference>
<dbReference type="EMBL" id="CP000058">
    <property type="protein sequence ID" value="AAZ36572.1"/>
    <property type="molecule type" value="Genomic_DNA"/>
</dbReference>
<dbReference type="RefSeq" id="WP_002552818.1">
    <property type="nucleotide sequence ID" value="NC_005773.3"/>
</dbReference>
<dbReference type="SMR" id="Q48KQ5"/>
<dbReference type="KEGG" id="psp:PSPPH_1786"/>
<dbReference type="eggNOG" id="COG0718">
    <property type="taxonomic scope" value="Bacteria"/>
</dbReference>
<dbReference type="HOGENOM" id="CLU_140930_0_0_6"/>
<dbReference type="Proteomes" id="UP000000551">
    <property type="component" value="Chromosome"/>
</dbReference>
<dbReference type="GO" id="GO:0043590">
    <property type="term" value="C:bacterial nucleoid"/>
    <property type="evidence" value="ECO:0007669"/>
    <property type="project" value="UniProtKB-UniRule"/>
</dbReference>
<dbReference type="GO" id="GO:0005829">
    <property type="term" value="C:cytosol"/>
    <property type="evidence" value="ECO:0007669"/>
    <property type="project" value="TreeGrafter"/>
</dbReference>
<dbReference type="GO" id="GO:0003677">
    <property type="term" value="F:DNA binding"/>
    <property type="evidence" value="ECO:0007669"/>
    <property type="project" value="UniProtKB-UniRule"/>
</dbReference>
<dbReference type="FunFam" id="3.30.1310.10:FF:000001">
    <property type="entry name" value="Nucleoid-associated protein YbaB"/>
    <property type="match status" value="1"/>
</dbReference>
<dbReference type="Gene3D" id="3.30.1310.10">
    <property type="entry name" value="Nucleoid-associated protein YbaB-like domain"/>
    <property type="match status" value="1"/>
</dbReference>
<dbReference type="HAMAP" id="MF_00274">
    <property type="entry name" value="DNA_YbaB_EbfC"/>
    <property type="match status" value="1"/>
</dbReference>
<dbReference type="InterPro" id="IPR036894">
    <property type="entry name" value="YbaB-like_sf"/>
</dbReference>
<dbReference type="InterPro" id="IPR004401">
    <property type="entry name" value="YbaB/EbfC"/>
</dbReference>
<dbReference type="NCBIfam" id="TIGR00103">
    <property type="entry name" value="DNA_YbaB_EbfC"/>
    <property type="match status" value="1"/>
</dbReference>
<dbReference type="PANTHER" id="PTHR33449">
    <property type="entry name" value="NUCLEOID-ASSOCIATED PROTEIN YBAB"/>
    <property type="match status" value="1"/>
</dbReference>
<dbReference type="PANTHER" id="PTHR33449:SF1">
    <property type="entry name" value="NUCLEOID-ASSOCIATED PROTEIN YBAB"/>
    <property type="match status" value="1"/>
</dbReference>
<dbReference type="Pfam" id="PF02575">
    <property type="entry name" value="YbaB_DNA_bd"/>
    <property type="match status" value="1"/>
</dbReference>
<dbReference type="PIRSF" id="PIRSF004555">
    <property type="entry name" value="UCP004555"/>
    <property type="match status" value="1"/>
</dbReference>
<dbReference type="SUPFAM" id="SSF82607">
    <property type="entry name" value="YbaB-like"/>
    <property type="match status" value="1"/>
</dbReference>
<keyword id="KW-0963">Cytoplasm</keyword>
<keyword id="KW-0238">DNA-binding</keyword>
<accession>Q48KQ5</accession>
<protein>
    <recommendedName>
        <fullName evidence="1">Nucleoid-associated protein PSPPH_1786</fullName>
    </recommendedName>
</protein>
<comment type="function">
    <text evidence="1">Binds to DNA and alters its conformation. May be involved in regulation of gene expression, nucleoid organization and DNA protection.</text>
</comment>
<comment type="subunit">
    <text evidence="1">Homodimer.</text>
</comment>
<comment type="subcellular location">
    <subcellularLocation>
        <location evidence="1">Cytoplasm</location>
        <location evidence="1">Nucleoid</location>
    </subcellularLocation>
</comment>
<comment type="similarity">
    <text evidence="1">Belongs to the YbaB/EbfC family.</text>
</comment>
<organism>
    <name type="scientific">Pseudomonas savastanoi pv. phaseolicola (strain 1448A / Race 6)</name>
    <name type="common">Pseudomonas syringae pv. phaseolicola (strain 1448A / Race 6)</name>
    <dbReference type="NCBI Taxonomy" id="264730"/>
    <lineage>
        <taxon>Bacteria</taxon>
        <taxon>Pseudomonadati</taxon>
        <taxon>Pseudomonadota</taxon>
        <taxon>Gammaproteobacteria</taxon>
        <taxon>Pseudomonadales</taxon>
        <taxon>Pseudomonadaceae</taxon>
        <taxon>Pseudomonas</taxon>
    </lineage>
</organism>
<sequence>MMKGGMAGLMKQAQQMQEKMAKMQEELANAEVTGQSGAGLVSVVMTGRHDVKRINLDDSLMQEDKEVLEDLIAAAVNDAVRKIEQASQDKTASMTAGMQLPPGMKLPF</sequence>